<name>QUEA_PROM3</name>
<accession>A2CBJ6</accession>
<protein>
    <recommendedName>
        <fullName evidence="1">S-adenosylmethionine:tRNA ribosyltransferase-isomerase</fullName>
        <ecNumber evidence="1">2.4.99.17</ecNumber>
    </recommendedName>
    <alternativeName>
        <fullName evidence="1">Queuosine biosynthesis protein QueA</fullName>
    </alternativeName>
</protein>
<organism>
    <name type="scientific">Prochlorococcus marinus (strain MIT 9303)</name>
    <dbReference type="NCBI Taxonomy" id="59922"/>
    <lineage>
        <taxon>Bacteria</taxon>
        <taxon>Bacillati</taxon>
        <taxon>Cyanobacteriota</taxon>
        <taxon>Cyanophyceae</taxon>
        <taxon>Synechococcales</taxon>
        <taxon>Prochlorococcaceae</taxon>
        <taxon>Prochlorococcus</taxon>
    </lineage>
</organism>
<sequence>MVLDPRDSLLSSYDYPLDPERIAQLPVEPRHAARLLIVQPLGMKPPIARHAEVWDWQEELRAGDLLVINDTRVLKARLRVRRSGGGLAELLVLEPRGEGRWLCLGRPAKRLRPGDQLWLEALGEEPIALQVISKDSASGGRVVQFPSHYANAEQLELLLERYGEVPLPPYIKCHDPSDSERYQTRYASRPGAVAAPTAGLHLSDELLEALKQRGVMLTSVTLHVGLGTFRPVETEDLRHLQLHSEWVEVRDEVVAAVMACRARAGRVIAVGTTSVRALEGAALAGGGFLQSFCGPVDLVIQPGYRFAVVDGLLTNFHLPKSSLLLLVSAMVGRERLLALYAEAIEHHYRFFSYGDAMWIDPGAVLPAARPC</sequence>
<comment type="function">
    <text evidence="1">Transfers and isomerizes the ribose moiety from AdoMet to the 7-aminomethyl group of 7-deazaguanine (preQ1-tRNA) to give epoxyqueuosine (oQ-tRNA).</text>
</comment>
<comment type="catalytic activity">
    <reaction evidence="1">
        <text>7-aminomethyl-7-carbaguanosine(34) in tRNA + S-adenosyl-L-methionine = epoxyqueuosine(34) in tRNA + adenine + L-methionine + 2 H(+)</text>
        <dbReference type="Rhea" id="RHEA:32155"/>
        <dbReference type="Rhea" id="RHEA-COMP:10342"/>
        <dbReference type="Rhea" id="RHEA-COMP:18582"/>
        <dbReference type="ChEBI" id="CHEBI:15378"/>
        <dbReference type="ChEBI" id="CHEBI:16708"/>
        <dbReference type="ChEBI" id="CHEBI:57844"/>
        <dbReference type="ChEBI" id="CHEBI:59789"/>
        <dbReference type="ChEBI" id="CHEBI:82833"/>
        <dbReference type="ChEBI" id="CHEBI:194443"/>
        <dbReference type="EC" id="2.4.99.17"/>
    </reaction>
</comment>
<comment type="pathway">
    <text evidence="1">tRNA modification; tRNA-queuosine biosynthesis.</text>
</comment>
<comment type="subunit">
    <text evidence="1">Monomer.</text>
</comment>
<comment type="subcellular location">
    <subcellularLocation>
        <location evidence="1">Cytoplasm</location>
    </subcellularLocation>
</comment>
<comment type="similarity">
    <text evidence="1">Belongs to the QueA family.</text>
</comment>
<keyword id="KW-0963">Cytoplasm</keyword>
<keyword id="KW-0671">Queuosine biosynthesis</keyword>
<keyword id="KW-0949">S-adenosyl-L-methionine</keyword>
<keyword id="KW-0808">Transferase</keyword>
<proteinExistence type="inferred from homology"/>
<reference key="1">
    <citation type="journal article" date="2007" name="PLoS Genet.">
        <title>Patterns and implications of gene gain and loss in the evolution of Prochlorococcus.</title>
        <authorList>
            <person name="Kettler G.C."/>
            <person name="Martiny A.C."/>
            <person name="Huang K."/>
            <person name="Zucker J."/>
            <person name="Coleman M.L."/>
            <person name="Rodrigue S."/>
            <person name="Chen F."/>
            <person name="Lapidus A."/>
            <person name="Ferriera S."/>
            <person name="Johnson J."/>
            <person name="Steglich C."/>
            <person name="Church G.M."/>
            <person name="Richardson P."/>
            <person name="Chisholm S.W."/>
        </authorList>
    </citation>
    <scope>NUCLEOTIDE SEQUENCE [LARGE SCALE GENOMIC DNA]</scope>
    <source>
        <strain>MIT 9303</strain>
    </source>
</reference>
<feature type="chain" id="PRO_1000015245" description="S-adenosylmethionine:tRNA ribosyltransferase-isomerase">
    <location>
        <begin position="1"/>
        <end position="371"/>
    </location>
</feature>
<dbReference type="EC" id="2.4.99.17" evidence="1"/>
<dbReference type="EMBL" id="CP000554">
    <property type="protein sequence ID" value="ABM78856.1"/>
    <property type="molecule type" value="Genomic_DNA"/>
</dbReference>
<dbReference type="RefSeq" id="WP_011826730.1">
    <property type="nucleotide sequence ID" value="NC_008820.1"/>
</dbReference>
<dbReference type="SMR" id="A2CBJ6"/>
<dbReference type="STRING" id="59922.P9303_21211"/>
<dbReference type="KEGG" id="pmf:P9303_21211"/>
<dbReference type="HOGENOM" id="CLU_039110_1_0_3"/>
<dbReference type="BioCyc" id="PMAR59922:G1G80-1852-MONOMER"/>
<dbReference type="UniPathway" id="UPA00392"/>
<dbReference type="Proteomes" id="UP000002274">
    <property type="component" value="Chromosome"/>
</dbReference>
<dbReference type="GO" id="GO:0005737">
    <property type="term" value="C:cytoplasm"/>
    <property type="evidence" value="ECO:0007669"/>
    <property type="project" value="UniProtKB-SubCell"/>
</dbReference>
<dbReference type="GO" id="GO:0051075">
    <property type="term" value="F:S-adenosylmethionine:tRNA ribosyltransferase-isomerase activity"/>
    <property type="evidence" value="ECO:0007669"/>
    <property type="project" value="UniProtKB-EC"/>
</dbReference>
<dbReference type="GO" id="GO:0008616">
    <property type="term" value="P:queuosine biosynthetic process"/>
    <property type="evidence" value="ECO:0007669"/>
    <property type="project" value="UniProtKB-UniRule"/>
</dbReference>
<dbReference type="GO" id="GO:0002099">
    <property type="term" value="P:tRNA wobble guanine modification"/>
    <property type="evidence" value="ECO:0007669"/>
    <property type="project" value="TreeGrafter"/>
</dbReference>
<dbReference type="Gene3D" id="2.40.10.240">
    <property type="entry name" value="QueA-like"/>
    <property type="match status" value="1"/>
</dbReference>
<dbReference type="Gene3D" id="3.40.1780.10">
    <property type="entry name" value="QueA-like"/>
    <property type="match status" value="2"/>
</dbReference>
<dbReference type="HAMAP" id="MF_00113">
    <property type="entry name" value="QueA"/>
    <property type="match status" value="1"/>
</dbReference>
<dbReference type="InterPro" id="IPR003699">
    <property type="entry name" value="QueA"/>
</dbReference>
<dbReference type="InterPro" id="IPR042118">
    <property type="entry name" value="QueA_dom1"/>
</dbReference>
<dbReference type="InterPro" id="IPR042119">
    <property type="entry name" value="QueA_dom2"/>
</dbReference>
<dbReference type="InterPro" id="IPR036100">
    <property type="entry name" value="QueA_sf"/>
</dbReference>
<dbReference type="NCBIfam" id="NF001140">
    <property type="entry name" value="PRK00147.1"/>
    <property type="match status" value="1"/>
</dbReference>
<dbReference type="NCBIfam" id="TIGR00113">
    <property type="entry name" value="queA"/>
    <property type="match status" value="1"/>
</dbReference>
<dbReference type="PANTHER" id="PTHR30307">
    <property type="entry name" value="S-ADENOSYLMETHIONINE:TRNA RIBOSYLTRANSFERASE-ISOMERASE"/>
    <property type="match status" value="1"/>
</dbReference>
<dbReference type="PANTHER" id="PTHR30307:SF0">
    <property type="entry name" value="S-ADENOSYLMETHIONINE:TRNA RIBOSYLTRANSFERASE-ISOMERASE"/>
    <property type="match status" value="1"/>
</dbReference>
<dbReference type="Pfam" id="PF02547">
    <property type="entry name" value="Queuosine_synth"/>
    <property type="match status" value="1"/>
</dbReference>
<dbReference type="SUPFAM" id="SSF111337">
    <property type="entry name" value="QueA-like"/>
    <property type="match status" value="1"/>
</dbReference>
<gene>
    <name evidence="1" type="primary">queA</name>
    <name type="ordered locus">P9303_21211</name>
</gene>
<evidence type="ECO:0000255" key="1">
    <source>
        <dbReference type="HAMAP-Rule" id="MF_00113"/>
    </source>
</evidence>